<comment type="similarity">
    <text evidence="1">Belongs to the UPF0145 family.</text>
</comment>
<evidence type="ECO:0000255" key="1">
    <source>
        <dbReference type="HAMAP-Rule" id="MF_00338"/>
    </source>
</evidence>
<feature type="chain" id="PRO_0000225833" description="UPF0145 protein lpg0197">
    <location>
        <begin position="1"/>
        <end position="105"/>
    </location>
</feature>
<sequence length="105" mass="11212">MTMMITTGNSFEGKVIKQYLGIVRGIVVRSPTISQGLMGGLKSIVGGKIGAYSEMCEHAREEAFQLMIEHAQALNANGIIAMRYDTGEIGQAGTEVLCYGTAVII</sequence>
<protein>
    <recommendedName>
        <fullName evidence="1">UPF0145 protein lpg0197</fullName>
    </recommendedName>
</protein>
<proteinExistence type="inferred from homology"/>
<keyword id="KW-1185">Reference proteome</keyword>
<accession>Q5ZZ14</accession>
<gene>
    <name type="ordered locus">lpg0197</name>
</gene>
<dbReference type="EMBL" id="AE017354">
    <property type="protein sequence ID" value="AAU26304.1"/>
    <property type="molecule type" value="Genomic_DNA"/>
</dbReference>
<dbReference type="RefSeq" id="WP_010945958.1">
    <property type="nucleotide sequence ID" value="NC_002942.5"/>
</dbReference>
<dbReference type="RefSeq" id="YP_094251.1">
    <property type="nucleotide sequence ID" value="NC_002942.5"/>
</dbReference>
<dbReference type="SMR" id="Q5ZZ14"/>
<dbReference type="STRING" id="272624.lpg0197"/>
<dbReference type="PaxDb" id="272624-lpg0197"/>
<dbReference type="KEGG" id="lpn:lpg0197"/>
<dbReference type="PATRIC" id="fig|272624.6.peg.211"/>
<dbReference type="eggNOG" id="COG0393">
    <property type="taxonomic scope" value="Bacteria"/>
</dbReference>
<dbReference type="HOGENOM" id="CLU_117144_1_1_6"/>
<dbReference type="OrthoDB" id="9796448at2"/>
<dbReference type="Proteomes" id="UP000000609">
    <property type="component" value="Chromosome"/>
</dbReference>
<dbReference type="Gene3D" id="3.30.110.70">
    <property type="entry name" value="Hypothetical protein apc22750. Chain B"/>
    <property type="match status" value="1"/>
</dbReference>
<dbReference type="HAMAP" id="MF_00338">
    <property type="entry name" value="UPF0145"/>
    <property type="match status" value="1"/>
</dbReference>
<dbReference type="InterPro" id="IPR035439">
    <property type="entry name" value="UPF0145_dom_sf"/>
</dbReference>
<dbReference type="InterPro" id="IPR002765">
    <property type="entry name" value="UPF0145_YbjQ-like"/>
</dbReference>
<dbReference type="PANTHER" id="PTHR34068:SF2">
    <property type="entry name" value="UPF0145 PROTEIN SCO3412"/>
    <property type="match status" value="1"/>
</dbReference>
<dbReference type="PANTHER" id="PTHR34068">
    <property type="entry name" value="UPF0145 PROTEIN YBJQ"/>
    <property type="match status" value="1"/>
</dbReference>
<dbReference type="Pfam" id="PF01906">
    <property type="entry name" value="YbjQ_1"/>
    <property type="match status" value="1"/>
</dbReference>
<dbReference type="SUPFAM" id="SSF117782">
    <property type="entry name" value="YbjQ-like"/>
    <property type="match status" value="1"/>
</dbReference>
<organism>
    <name type="scientific">Legionella pneumophila subsp. pneumophila (strain Philadelphia 1 / ATCC 33152 / DSM 7513)</name>
    <dbReference type="NCBI Taxonomy" id="272624"/>
    <lineage>
        <taxon>Bacteria</taxon>
        <taxon>Pseudomonadati</taxon>
        <taxon>Pseudomonadota</taxon>
        <taxon>Gammaproteobacteria</taxon>
        <taxon>Legionellales</taxon>
        <taxon>Legionellaceae</taxon>
        <taxon>Legionella</taxon>
    </lineage>
</organism>
<reference key="1">
    <citation type="journal article" date="2004" name="Science">
        <title>The genomic sequence of the accidental pathogen Legionella pneumophila.</title>
        <authorList>
            <person name="Chien M."/>
            <person name="Morozova I."/>
            <person name="Shi S."/>
            <person name="Sheng H."/>
            <person name="Chen J."/>
            <person name="Gomez S.M."/>
            <person name="Asamani G."/>
            <person name="Hill K."/>
            <person name="Nuara J."/>
            <person name="Feder M."/>
            <person name="Rineer J."/>
            <person name="Greenberg J.J."/>
            <person name="Steshenko V."/>
            <person name="Park S.H."/>
            <person name="Zhao B."/>
            <person name="Teplitskaya E."/>
            <person name="Edwards J.R."/>
            <person name="Pampou S."/>
            <person name="Georghiou A."/>
            <person name="Chou I.-C."/>
            <person name="Iannuccilli W."/>
            <person name="Ulz M.E."/>
            <person name="Kim D.H."/>
            <person name="Geringer-Sameth A."/>
            <person name="Goldsberry C."/>
            <person name="Morozov P."/>
            <person name="Fischer S.G."/>
            <person name="Segal G."/>
            <person name="Qu X."/>
            <person name="Rzhetsky A."/>
            <person name="Zhang P."/>
            <person name="Cayanis E."/>
            <person name="De Jong P.J."/>
            <person name="Ju J."/>
            <person name="Kalachikov S."/>
            <person name="Shuman H.A."/>
            <person name="Russo J.J."/>
        </authorList>
    </citation>
    <scope>NUCLEOTIDE SEQUENCE [LARGE SCALE GENOMIC DNA]</scope>
    <source>
        <strain>Philadelphia 1 / ATCC 33152 / DSM 7513</strain>
    </source>
</reference>
<name>Y197_LEGPH</name>